<reference key="1">
    <citation type="journal article" date="1988" name="Eur. J. Biochem.">
        <title>Plastid-localised seed acyl-carrier protein of Brassica napus is encoded by a distinct, nuclear multigene family.</title>
        <authorList>
            <person name="Safford R."/>
            <person name="Windust J.H.C."/>
            <person name="Lucas C."/>
            <person name="de Silva J."/>
            <person name="James C.M."/>
            <person name="Hellyer A."/>
            <person name="Smith C.G."/>
            <person name="Slabas A.R."/>
            <person name="Hughes S.G."/>
        </authorList>
    </citation>
    <scope>NUCLEOTIDE SEQUENCE [MRNA]</scope>
    <source>
        <strain>cv. Jet neuf</strain>
        <tissue>Seed</tissue>
    </source>
</reference>
<reference key="2">
    <citation type="journal article" date="1994" name="Plant Mol. Biol. Rep.">
        <title>Nomenclature for genes encoding acyl carrier protein (ACP).</title>
        <authorList>
            <person name="von Wettstein-Knowles P."/>
            <person name="Knauf V."/>
            <person name="Ohlrogge J.B."/>
            <person name="Lamppa G."/>
            <person name="Safford R."/>
            <person name="Souciet G."/>
        </authorList>
    </citation>
    <scope>NOMENCLATURE</scope>
</reference>
<accession>P08971</accession>
<comment type="function">
    <text>Carrier of the growing fatty acid chain in fatty acid biosynthesis.</text>
</comment>
<comment type="pathway">
    <text>Lipid metabolism; fatty acid biosynthesis.</text>
</comment>
<comment type="subcellular location">
    <subcellularLocation>
        <location>Plastid</location>
        <location>Chloroplast</location>
    </subcellularLocation>
</comment>
<comment type="tissue specificity">
    <text>Seed.</text>
</comment>
<comment type="PTM">
    <text evidence="1">4'-phosphopantetheine is transferred from CoA to a specific serine of apo-ACP by acpS. This modification is essential for activity because fatty acids are bound in thioester linkage to the sulfhydryl of the prosthetic group (By similarity).</text>
</comment>
<comment type="miscellaneous">
    <text>In rape seeds ACP is coded by two multigene families. There are probably a total of 35 genes.</text>
</comment>
<comment type="miscellaneous">
    <text>The sequence shown is that of ACL1.C1.</text>
</comment>
<comment type="similarity">
    <text evidence="3">Belongs to the acyl carrier protein (ACP) family.</text>
</comment>
<dbReference type="EMBL" id="X07970">
    <property type="protein sequence ID" value="CAA30782.1"/>
    <property type="molecule type" value="mRNA"/>
</dbReference>
<dbReference type="EMBL" id="X13122">
    <property type="protein sequence ID" value="CAA31513.1"/>
    <property type="molecule type" value="mRNA"/>
</dbReference>
<dbReference type="EMBL" id="X13123">
    <property type="protein sequence ID" value="CAA31514.1"/>
    <property type="molecule type" value="mRNA"/>
</dbReference>
<dbReference type="EMBL" id="X13124">
    <property type="protein sequence ID" value="CAA31515.1"/>
    <property type="molecule type" value="mRNA"/>
</dbReference>
<dbReference type="PIR" id="S00806">
    <property type="entry name" value="S00806"/>
</dbReference>
<dbReference type="SMR" id="P08971"/>
<dbReference type="OrthoDB" id="448946at2759"/>
<dbReference type="UniPathway" id="UPA00094"/>
<dbReference type="GO" id="GO:0009507">
    <property type="term" value="C:chloroplast"/>
    <property type="evidence" value="ECO:0007669"/>
    <property type="project" value="UniProtKB-SubCell"/>
</dbReference>
<dbReference type="GO" id="GO:0000036">
    <property type="term" value="F:acyl carrier activity"/>
    <property type="evidence" value="ECO:0007669"/>
    <property type="project" value="InterPro"/>
</dbReference>
<dbReference type="GO" id="GO:0031177">
    <property type="term" value="F:phosphopantetheine binding"/>
    <property type="evidence" value="ECO:0007669"/>
    <property type="project" value="InterPro"/>
</dbReference>
<dbReference type="FunFam" id="1.10.1200.10:FF:000017">
    <property type="entry name" value="Acyl carrier protein"/>
    <property type="match status" value="1"/>
</dbReference>
<dbReference type="Gene3D" id="1.10.1200.10">
    <property type="entry name" value="ACP-like"/>
    <property type="match status" value="1"/>
</dbReference>
<dbReference type="HAMAP" id="MF_01217">
    <property type="entry name" value="Acyl_carrier"/>
    <property type="match status" value="1"/>
</dbReference>
<dbReference type="InterPro" id="IPR003231">
    <property type="entry name" value="ACP"/>
</dbReference>
<dbReference type="InterPro" id="IPR036736">
    <property type="entry name" value="ACP-like_sf"/>
</dbReference>
<dbReference type="InterPro" id="IPR044813">
    <property type="entry name" value="ACP_chloroplastic"/>
</dbReference>
<dbReference type="InterPro" id="IPR020806">
    <property type="entry name" value="PKS_PP-bd"/>
</dbReference>
<dbReference type="InterPro" id="IPR009081">
    <property type="entry name" value="PP-bd_ACP"/>
</dbReference>
<dbReference type="InterPro" id="IPR006162">
    <property type="entry name" value="Ppantetheine_attach_site"/>
</dbReference>
<dbReference type="NCBIfam" id="TIGR00517">
    <property type="entry name" value="acyl_carrier"/>
    <property type="match status" value="1"/>
</dbReference>
<dbReference type="NCBIfam" id="NF002148">
    <property type="entry name" value="PRK00982.1-2"/>
    <property type="match status" value="1"/>
</dbReference>
<dbReference type="PANTHER" id="PTHR46153">
    <property type="entry name" value="ACYL CARRIER PROTEIN"/>
    <property type="match status" value="1"/>
</dbReference>
<dbReference type="PANTHER" id="PTHR46153:SF9">
    <property type="entry name" value="ACYL CARRIER PROTEIN 1, CHLOROPLASTIC"/>
    <property type="match status" value="1"/>
</dbReference>
<dbReference type="Pfam" id="PF00550">
    <property type="entry name" value="PP-binding"/>
    <property type="match status" value="1"/>
</dbReference>
<dbReference type="SMART" id="SM00823">
    <property type="entry name" value="PKS_PP"/>
    <property type="match status" value="1"/>
</dbReference>
<dbReference type="SUPFAM" id="SSF47336">
    <property type="entry name" value="ACP-like"/>
    <property type="match status" value="1"/>
</dbReference>
<dbReference type="PROSITE" id="PS50075">
    <property type="entry name" value="CARRIER"/>
    <property type="match status" value="1"/>
</dbReference>
<dbReference type="PROSITE" id="PS00012">
    <property type="entry name" value="PHOSPHOPANTETHEINE"/>
    <property type="match status" value="1"/>
</dbReference>
<sequence>MATTFSASVSMQATSLATTTRISFQKPVLVSNHGRTNLSFNLSRTRLSISCAAKQETVEKVSEIVKKQLSLKDDQQVVAETKFVDLGADSLDTVEIVMGLEEEFGIQMAEEKAQKIATVEQAAELIEELMQAKK</sequence>
<gene>
    <name type="primary">ACL1.C1</name>
</gene>
<gene>
    <name type="primary">ACL1.C2</name>
</gene>
<proteinExistence type="evidence at transcript level"/>
<protein>
    <recommendedName>
        <fullName>Acyl carrier protein, chloroplastic</fullName>
        <shortName>ACP</shortName>
    </recommendedName>
    <alternativeName>
        <fullName>Clones 28F10, 10H11/11D11, 34F12 and 04F05/05E01</fullName>
    </alternativeName>
</protein>
<name>ACP5_BRANA</name>
<feature type="transit peptide" description="Chloroplast">
    <location>
        <begin position="1"/>
        <end position="51"/>
    </location>
</feature>
<feature type="chain" id="PRO_0000000575" description="Acyl carrier protein, chloroplastic">
    <location>
        <begin position="52"/>
        <end position="134"/>
    </location>
</feature>
<feature type="domain" description="Carrier" evidence="2">
    <location>
        <begin position="55"/>
        <end position="130"/>
    </location>
</feature>
<feature type="modified residue" description="O-(pantetheine 4'-phosphoryl)serine" evidence="2">
    <location>
        <position position="90"/>
    </location>
</feature>
<feature type="sequence variant" description="In ACL1.C2.">
    <original>A</original>
    <variation>V</variation>
    <location>
        <position position="17"/>
    </location>
</feature>
<evidence type="ECO:0000250" key="1"/>
<evidence type="ECO:0000255" key="2">
    <source>
        <dbReference type="PROSITE-ProRule" id="PRU00258"/>
    </source>
</evidence>
<evidence type="ECO:0000305" key="3"/>
<organism>
    <name type="scientific">Brassica napus</name>
    <name type="common">Rape</name>
    <dbReference type="NCBI Taxonomy" id="3708"/>
    <lineage>
        <taxon>Eukaryota</taxon>
        <taxon>Viridiplantae</taxon>
        <taxon>Streptophyta</taxon>
        <taxon>Embryophyta</taxon>
        <taxon>Tracheophyta</taxon>
        <taxon>Spermatophyta</taxon>
        <taxon>Magnoliopsida</taxon>
        <taxon>eudicotyledons</taxon>
        <taxon>Gunneridae</taxon>
        <taxon>Pentapetalae</taxon>
        <taxon>rosids</taxon>
        <taxon>malvids</taxon>
        <taxon>Brassicales</taxon>
        <taxon>Brassicaceae</taxon>
        <taxon>Brassiceae</taxon>
        <taxon>Brassica</taxon>
    </lineage>
</organism>
<keyword id="KW-0150">Chloroplast</keyword>
<keyword id="KW-0275">Fatty acid biosynthesis</keyword>
<keyword id="KW-0276">Fatty acid metabolism</keyword>
<keyword id="KW-0444">Lipid biosynthesis</keyword>
<keyword id="KW-0443">Lipid metabolism</keyword>
<keyword id="KW-0596">Phosphopantetheine</keyword>
<keyword id="KW-0597">Phosphoprotein</keyword>
<keyword id="KW-0934">Plastid</keyword>
<keyword id="KW-0809">Transit peptide</keyword>